<evidence type="ECO:0000255" key="1">
    <source>
        <dbReference type="HAMAP-Rule" id="MF_00054"/>
    </source>
</evidence>
<comment type="function">
    <text evidence="1">Catalyzes the GTP-dependent ribosomal translocation step during translation elongation. During this step, the ribosome changes from the pre-translocational (PRE) to the post-translocational (POST) state as the newly formed A-site-bound peptidyl-tRNA and P-site-bound deacylated tRNA move to the P and E sites, respectively. Catalyzes the coordinated movement of the two tRNA molecules, the mRNA and conformational changes in the ribosome.</text>
</comment>
<comment type="subcellular location">
    <subcellularLocation>
        <location evidence="1">Cytoplasm</location>
    </subcellularLocation>
</comment>
<comment type="similarity">
    <text evidence="1">Belongs to the TRAFAC class translation factor GTPase superfamily. Classic translation factor GTPase family. EF-G/EF-2 subfamily.</text>
</comment>
<protein>
    <recommendedName>
        <fullName evidence="1">Elongation factor G 2</fullName>
        <shortName evidence="1">EF-G 2</shortName>
    </recommendedName>
</protein>
<name>EFG2_PHOPR</name>
<dbReference type="EMBL" id="CR378667">
    <property type="protein sequence ID" value="CAG19645.1"/>
    <property type="molecule type" value="Genomic_DNA"/>
</dbReference>
<dbReference type="RefSeq" id="WP_011217975.1">
    <property type="nucleotide sequence ID" value="NC_006370.1"/>
</dbReference>
<dbReference type="SMR" id="Q6LST1"/>
<dbReference type="STRING" id="298386.PBPRA1234"/>
<dbReference type="KEGG" id="ppr:PBPRA1234"/>
<dbReference type="eggNOG" id="COG0480">
    <property type="taxonomic scope" value="Bacteria"/>
</dbReference>
<dbReference type="HOGENOM" id="CLU_002794_4_1_6"/>
<dbReference type="Proteomes" id="UP000000593">
    <property type="component" value="Chromosome 1"/>
</dbReference>
<dbReference type="GO" id="GO:0005737">
    <property type="term" value="C:cytoplasm"/>
    <property type="evidence" value="ECO:0007669"/>
    <property type="project" value="UniProtKB-SubCell"/>
</dbReference>
<dbReference type="GO" id="GO:0005525">
    <property type="term" value="F:GTP binding"/>
    <property type="evidence" value="ECO:0007669"/>
    <property type="project" value="UniProtKB-UniRule"/>
</dbReference>
<dbReference type="GO" id="GO:0003924">
    <property type="term" value="F:GTPase activity"/>
    <property type="evidence" value="ECO:0007669"/>
    <property type="project" value="InterPro"/>
</dbReference>
<dbReference type="GO" id="GO:0097216">
    <property type="term" value="F:guanosine tetraphosphate binding"/>
    <property type="evidence" value="ECO:0007669"/>
    <property type="project" value="UniProtKB-ARBA"/>
</dbReference>
<dbReference type="GO" id="GO:0003746">
    <property type="term" value="F:translation elongation factor activity"/>
    <property type="evidence" value="ECO:0007669"/>
    <property type="project" value="UniProtKB-UniRule"/>
</dbReference>
<dbReference type="GO" id="GO:0032790">
    <property type="term" value="P:ribosome disassembly"/>
    <property type="evidence" value="ECO:0007669"/>
    <property type="project" value="TreeGrafter"/>
</dbReference>
<dbReference type="CDD" id="cd01886">
    <property type="entry name" value="EF-G"/>
    <property type="match status" value="1"/>
</dbReference>
<dbReference type="CDD" id="cd16262">
    <property type="entry name" value="EFG_III"/>
    <property type="match status" value="1"/>
</dbReference>
<dbReference type="CDD" id="cd01434">
    <property type="entry name" value="EFG_mtEFG1_IV"/>
    <property type="match status" value="1"/>
</dbReference>
<dbReference type="CDD" id="cd03713">
    <property type="entry name" value="EFG_mtEFG_C"/>
    <property type="match status" value="1"/>
</dbReference>
<dbReference type="CDD" id="cd04088">
    <property type="entry name" value="EFG_mtEFG_II"/>
    <property type="match status" value="1"/>
</dbReference>
<dbReference type="FunFam" id="2.40.30.10:FF:000006">
    <property type="entry name" value="Elongation factor G"/>
    <property type="match status" value="1"/>
</dbReference>
<dbReference type="FunFam" id="3.30.230.10:FF:000003">
    <property type="entry name" value="Elongation factor G"/>
    <property type="match status" value="1"/>
</dbReference>
<dbReference type="FunFam" id="3.30.70.240:FF:000001">
    <property type="entry name" value="Elongation factor G"/>
    <property type="match status" value="1"/>
</dbReference>
<dbReference type="FunFam" id="3.30.70.870:FF:000006">
    <property type="entry name" value="Elongation factor G"/>
    <property type="match status" value="1"/>
</dbReference>
<dbReference type="FunFam" id="3.40.50.300:FF:000029">
    <property type="entry name" value="Elongation factor G"/>
    <property type="match status" value="1"/>
</dbReference>
<dbReference type="Gene3D" id="3.30.230.10">
    <property type="match status" value="1"/>
</dbReference>
<dbReference type="Gene3D" id="3.30.70.240">
    <property type="match status" value="1"/>
</dbReference>
<dbReference type="Gene3D" id="3.30.70.870">
    <property type="entry name" value="Elongation Factor G (Translational Gtpase), domain 3"/>
    <property type="match status" value="1"/>
</dbReference>
<dbReference type="Gene3D" id="3.40.50.300">
    <property type="entry name" value="P-loop containing nucleotide triphosphate hydrolases"/>
    <property type="match status" value="1"/>
</dbReference>
<dbReference type="Gene3D" id="2.40.30.10">
    <property type="entry name" value="Translation factors"/>
    <property type="match status" value="1"/>
</dbReference>
<dbReference type="HAMAP" id="MF_00054_B">
    <property type="entry name" value="EF_G_EF_2_B"/>
    <property type="match status" value="1"/>
</dbReference>
<dbReference type="InterPro" id="IPR041095">
    <property type="entry name" value="EFG_II"/>
</dbReference>
<dbReference type="InterPro" id="IPR009022">
    <property type="entry name" value="EFG_III"/>
</dbReference>
<dbReference type="InterPro" id="IPR035647">
    <property type="entry name" value="EFG_III/V"/>
</dbReference>
<dbReference type="InterPro" id="IPR047872">
    <property type="entry name" value="EFG_IV"/>
</dbReference>
<dbReference type="InterPro" id="IPR035649">
    <property type="entry name" value="EFG_V"/>
</dbReference>
<dbReference type="InterPro" id="IPR000640">
    <property type="entry name" value="EFG_V-like"/>
</dbReference>
<dbReference type="InterPro" id="IPR004161">
    <property type="entry name" value="EFTu-like_2"/>
</dbReference>
<dbReference type="InterPro" id="IPR031157">
    <property type="entry name" value="G_TR_CS"/>
</dbReference>
<dbReference type="InterPro" id="IPR027417">
    <property type="entry name" value="P-loop_NTPase"/>
</dbReference>
<dbReference type="InterPro" id="IPR020568">
    <property type="entry name" value="Ribosomal_Su5_D2-typ_SF"/>
</dbReference>
<dbReference type="InterPro" id="IPR014721">
    <property type="entry name" value="Ribsml_uS5_D2-typ_fold_subgr"/>
</dbReference>
<dbReference type="InterPro" id="IPR005225">
    <property type="entry name" value="Small_GTP-bd"/>
</dbReference>
<dbReference type="InterPro" id="IPR000795">
    <property type="entry name" value="T_Tr_GTP-bd_dom"/>
</dbReference>
<dbReference type="InterPro" id="IPR009000">
    <property type="entry name" value="Transl_B-barrel_sf"/>
</dbReference>
<dbReference type="InterPro" id="IPR004540">
    <property type="entry name" value="Transl_elong_EFG/EF2"/>
</dbReference>
<dbReference type="InterPro" id="IPR005517">
    <property type="entry name" value="Transl_elong_EFG/EF2_IV"/>
</dbReference>
<dbReference type="NCBIfam" id="TIGR00484">
    <property type="entry name" value="EF-G"/>
    <property type="match status" value="1"/>
</dbReference>
<dbReference type="NCBIfam" id="NF009381">
    <property type="entry name" value="PRK12740.1-5"/>
    <property type="match status" value="1"/>
</dbReference>
<dbReference type="NCBIfam" id="TIGR00231">
    <property type="entry name" value="small_GTP"/>
    <property type="match status" value="1"/>
</dbReference>
<dbReference type="PANTHER" id="PTHR43261:SF5">
    <property type="entry name" value="ELONGATION FACTOR G 1"/>
    <property type="match status" value="1"/>
</dbReference>
<dbReference type="PANTHER" id="PTHR43261">
    <property type="entry name" value="TRANSLATION ELONGATION FACTOR G-RELATED"/>
    <property type="match status" value="1"/>
</dbReference>
<dbReference type="Pfam" id="PF00679">
    <property type="entry name" value="EFG_C"/>
    <property type="match status" value="1"/>
</dbReference>
<dbReference type="Pfam" id="PF14492">
    <property type="entry name" value="EFG_III"/>
    <property type="match status" value="1"/>
</dbReference>
<dbReference type="Pfam" id="PF03764">
    <property type="entry name" value="EFG_IV"/>
    <property type="match status" value="1"/>
</dbReference>
<dbReference type="Pfam" id="PF00009">
    <property type="entry name" value="GTP_EFTU"/>
    <property type="match status" value="1"/>
</dbReference>
<dbReference type="Pfam" id="PF03144">
    <property type="entry name" value="GTP_EFTU_D2"/>
    <property type="match status" value="1"/>
</dbReference>
<dbReference type="PRINTS" id="PR00315">
    <property type="entry name" value="ELONGATNFCT"/>
</dbReference>
<dbReference type="SMART" id="SM00838">
    <property type="entry name" value="EFG_C"/>
    <property type="match status" value="1"/>
</dbReference>
<dbReference type="SMART" id="SM00889">
    <property type="entry name" value="EFG_IV"/>
    <property type="match status" value="1"/>
</dbReference>
<dbReference type="SUPFAM" id="SSF54980">
    <property type="entry name" value="EF-G C-terminal domain-like"/>
    <property type="match status" value="2"/>
</dbReference>
<dbReference type="SUPFAM" id="SSF52540">
    <property type="entry name" value="P-loop containing nucleoside triphosphate hydrolases"/>
    <property type="match status" value="1"/>
</dbReference>
<dbReference type="SUPFAM" id="SSF54211">
    <property type="entry name" value="Ribosomal protein S5 domain 2-like"/>
    <property type="match status" value="1"/>
</dbReference>
<dbReference type="SUPFAM" id="SSF50447">
    <property type="entry name" value="Translation proteins"/>
    <property type="match status" value="1"/>
</dbReference>
<dbReference type="PROSITE" id="PS00301">
    <property type="entry name" value="G_TR_1"/>
    <property type="match status" value="1"/>
</dbReference>
<dbReference type="PROSITE" id="PS51722">
    <property type="entry name" value="G_TR_2"/>
    <property type="match status" value="1"/>
</dbReference>
<keyword id="KW-0963">Cytoplasm</keyword>
<keyword id="KW-0251">Elongation factor</keyword>
<keyword id="KW-0342">GTP-binding</keyword>
<keyword id="KW-0547">Nucleotide-binding</keyword>
<keyword id="KW-0648">Protein biosynthesis</keyword>
<keyword id="KW-1185">Reference proteome</keyword>
<feature type="chain" id="PRO_0000091177" description="Elongation factor G 2">
    <location>
        <begin position="1"/>
        <end position="695"/>
    </location>
</feature>
<feature type="domain" description="tr-type G">
    <location>
        <begin position="5"/>
        <end position="280"/>
    </location>
</feature>
<feature type="binding site" evidence="1">
    <location>
        <begin position="14"/>
        <end position="21"/>
    </location>
    <ligand>
        <name>GTP</name>
        <dbReference type="ChEBI" id="CHEBI:37565"/>
    </ligand>
</feature>
<feature type="binding site" evidence="1">
    <location>
        <begin position="78"/>
        <end position="82"/>
    </location>
    <ligand>
        <name>GTP</name>
        <dbReference type="ChEBI" id="CHEBI:37565"/>
    </ligand>
</feature>
<feature type="binding site" evidence="1">
    <location>
        <begin position="132"/>
        <end position="135"/>
    </location>
    <ligand>
        <name>GTP</name>
        <dbReference type="ChEBI" id="CHEBI:37565"/>
    </ligand>
</feature>
<accession>Q6LST1</accession>
<reference key="1">
    <citation type="journal article" date="2005" name="Science">
        <title>Life at depth: Photobacterium profundum genome sequence and expression analysis.</title>
        <authorList>
            <person name="Vezzi A."/>
            <person name="Campanaro S."/>
            <person name="D'Angelo M."/>
            <person name="Simonato F."/>
            <person name="Vitulo N."/>
            <person name="Lauro F.M."/>
            <person name="Cestaro A."/>
            <person name="Malacrida G."/>
            <person name="Simionati B."/>
            <person name="Cannata N."/>
            <person name="Romualdi C."/>
            <person name="Bartlett D.H."/>
            <person name="Valle G."/>
        </authorList>
    </citation>
    <scope>NUCLEOTIDE SEQUENCE [LARGE SCALE GENOMIC DNA]</scope>
    <source>
        <strain>ATCC BAA-1253 / SS9</strain>
    </source>
</reference>
<sequence>MSDLSKYRNIGIFAHVDAGKTTTTERILKLTGQIHKTGEVHDGESTTDFMEQEAERGITIQSAAVSCFWKDHRFNVIDTPGHVDFTVEVYRSLKVLDGGIGVFCGSGGVEPQSETNWRYANDSEVARIIFVNKLDRIGADFLNVVDQIKNVLGAVPLVMTLPIGREDDFVGVVDILSRQAYVWDDTGLPENYEITDIPADMVDDVEAYREELIETALEQDDDLLEAYMEGEMPTDEQVKMCIRRGTRDCSFFPTYCGSAFKNKGMQLILDAVVDYLPSPTEVDPQPLTDPETGEPTGEVATVSVDAPLKALAFKIMDDRFGALTFIRIYAGKLNKGDTILNSATGKTERIGRMVEMQADQRNELSSAQAGDIIAVVGMKNVKTGHTLCDVKHECTLEAMIFPTPVISIAVTPKDKGGSEKMGIAIGKMVAEDPSFLVHTDEETGETILKGMGELHLDIKVDILKRTYGVDLIVGAPQVAYRETITKPVEDSYTHKKQSGGSGQFGKIDYIMKPGEVGSGFKFTSSVVGGNVPKEFWPAIEKGFKGMMDTGVLAGFPVLDVEIELLDGGFHAVDSSAVAFEIAAKGAFRQSMPKAGAQLLEPIMAVDVFTPEDHVGDVIGDLNRRRGMIKDQMAGVTGSRIKADVPLSEMFGYIGHLRTMTSGRGQFSMEFAHYAPCPVNVAATVIEEVKALNAKK</sequence>
<organism>
    <name type="scientific">Photobacterium profundum (strain SS9)</name>
    <dbReference type="NCBI Taxonomy" id="298386"/>
    <lineage>
        <taxon>Bacteria</taxon>
        <taxon>Pseudomonadati</taxon>
        <taxon>Pseudomonadota</taxon>
        <taxon>Gammaproteobacteria</taxon>
        <taxon>Vibrionales</taxon>
        <taxon>Vibrionaceae</taxon>
        <taxon>Photobacterium</taxon>
    </lineage>
</organism>
<gene>
    <name evidence="1" type="primary">fusA2</name>
    <name type="ordered locus">PBPRA1234</name>
</gene>
<proteinExistence type="inferred from homology"/>